<keyword id="KW-0413">Isomerase</keyword>
<keyword id="KW-0460">Magnesium</keyword>
<keyword id="KW-0479">Metal-binding</keyword>
<keyword id="KW-0597">Phosphoprotein</keyword>
<keyword id="KW-1185">Reference proteome</keyword>
<evidence type="ECO:0000255" key="1">
    <source>
        <dbReference type="HAMAP-Rule" id="MF_01554"/>
    </source>
</evidence>
<reference key="1">
    <citation type="journal article" date="2004" name="Proc. Natl. Acad. Sci. U.S.A.">
        <title>Genome sequence of the deep-sea gamma-proteobacterium Idiomarina loihiensis reveals amino acid fermentation as a source of carbon and energy.</title>
        <authorList>
            <person name="Hou S."/>
            <person name="Saw J.H."/>
            <person name="Lee K.S."/>
            <person name="Freitas T.A."/>
            <person name="Belisle C."/>
            <person name="Kawarabayasi Y."/>
            <person name="Donachie S.P."/>
            <person name="Pikina A."/>
            <person name="Galperin M.Y."/>
            <person name="Koonin E.V."/>
            <person name="Makarova K.S."/>
            <person name="Omelchenko M.V."/>
            <person name="Sorokin A."/>
            <person name="Wolf Y.I."/>
            <person name="Li Q.X."/>
            <person name="Keum Y.S."/>
            <person name="Campbell S."/>
            <person name="Denery J."/>
            <person name="Aizawa S."/>
            <person name="Shibata S."/>
            <person name="Malahoff A."/>
            <person name="Alam M."/>
        </authorList>
    </citation>
    <scope>NUCLEOTIDE SEQUENCE [LARGE SCALE GENOMIC DNA]</scope>
    <source>
        <strain>ATCC BAA-735 / DSM 15497 / L2-TR</strain>
    </source>
</reference>
<gene>
    <name evidence="1" type="primary">glmM</name>
    <name type="ordered locus">IL0973</name>
</gene>
<accession>Q5R0R2</accession>
<feature type="chain" id="PRO_0000147901" description="Phosphoglucosamine mutase">
    <location>
        <begin position="1"/>
        <end position="446"/>
    </location>
</feature>
<feature type="active site" description="Phosphoserine intermediate" evidence="1">
    <location>
        <position position="102"/>
    </location>
</feature>
<feature type="binding site" description="via phosphate group" evidence="1">
    <location>
        <position position="102"/>
    </location>
    <ligand>
        <name>Mg(2+)</name>
        <dbReference type="ChEBI" id="CHEBI:18420"/>
    </ligand>
</feature>
<feature type="binding site" evidence="1">
    <location>
        <position position="241"/>
    </location>
    <ligand>
        <name>Mg(2+)</name>
        <dbReference type="ChEBI" id="CHEBI:18420"/>
    </ligand>
</feature>
<feature type="binding site" evidence="1">
    <location>
        <position position="243"/>
    </location>
    <ligand>
        <name>Mg(2+)</name>
        <dbReference type="ChEBI" id="CHEBI:18420"/>
    </ligand>
</feature>
<feature type="binding site" evidence="1">
    <location>
        <position position="245"/>
    </location>
    <ligand>
        <name>Mg(2+)</name>
        <dbReference type="ChEBI" id="CHEBI:18420"/>
    </ligand>
</feature>
<feature type="modified residue" description="Phosphoserine" evidence="1">
    <location>
        <position position="102"/>
    </location>
</feature>
<name>GLMM_IDILO</name>
<sequence length="446" mass="48571">MSERKYFGTDGVRGRVGQFPITPEFAVKLGWAAGRVLAAKGTSRVLVGKDTRVSGYMLESALEAGLAAAGVGVDFLGPMPTPGIAYLTRTFRAAAGIVISASHNPYYDNGIKFFADNGHKLPDAVELEIERLLDEPMDCVISEELGRAKRINDAAGRYIEFCKSVFPNEMTLEGLHIVVDCAHGATYHIAPNVLRELGAEVTEIGTQPNGLNINKECGATHLTALQNKVLETKADLGIALDGDGDRIMMVTENGRPIDGDEILYMLAVTAQNQGQLQGGVVGTLMTNFALEKELDKRRIPFVRAKVGDRYVIEELVKRDWYLGGENSGHVINRQHHTTGDGIIAGLQVLAAMYQEQKSLEKLSCDFHKLPQVLINVRFESDKQPLESENVKSVVREVESALAGTGRVLLRKSGTEPLIRVMVEGENEAKVKAFAQQIANEVEAATN</sequence>
<organism>
    <name type="scientific">Idiomarina loihiensis (strain ATCC BAA-735 / DSM 15497 / L2-TR)</name>
    <dbReference type="NCBI Taxonomy" id="283942"/>
    <lineage>
        <taxon>Bacteria</taxon>
        <taxon>Pseudomonadati</taxon>
        <taxon>Pseudomonadota</taxon>
        <taxon>Gammaproteobacteria</taxon>
        <taxon>Alteromonadales</taxon>
        <taxon>Idiomarinaceae</taxon>
        <taxon>Idiomarina</taxon>
    </lineage>
</organism>
<dbReference type="EC" id="5.4.2.10" evidence="1"/>
<dbReference type="EMBL" id="AE017340">
    <property type="protein sequence ID" value="AAV81813.1"/>
    <property type="molecule type" value="Genomic_DNA"/>
</dbReference>
<dbReference type="RefSeq" id="WP_011234224.1">
    <property type="nucleotide sequence ID" value="NC_006512.1"/>
</dbReference>
<dbReference type="SMR" id="Q5R0R2"/>
<dbReference type="STRING" id="283942.IL0973"/>
<dbReference type="GeneID" id="41336135"/>
<dbReference type="KEGG" id="ilo:IL0973"/>
<dbReference type="eggNOG" id="COG1109">
    <property type="taxonomic scope" value="Bacteria"/>
</dbReference>
<dbReference type="HOGENOM" id="CLU_016950_7_0_6"/>
<dbReference type="OrthoDB" id="9803322at2"/>
<dbReference type="Proteomes" id="UP000001171">
    <property type="component" value="Chromosome"/>
</dbReference>
<dbReference type="GO" id="GO:0005829">
    <property type="term" value="C:cytosol"/>
    <property type="evidence" value="ECO:0007669"/>
    <property type="project" value="TreeGrafter"/>
</dbReference>
<dbReference type="GO" id="GO:0000287">
    <property type="term" value="F:magnesium ion binding"/>
    <property type="evidence" value="ECO:0007669"/>
    <property type="project" value="UniProtKB-UniRule"/>
</dbReference>
<dbReference type="GO" id="GO:0008966">
    <property type="term" value="F:phosphoglucosamine mutase activity"/>
    <property type="evidence" value="ECO:0007669"/>
    <property type="project" value="UniProtKB-UniRule"/>
</dbReference>
<dbReference type="GO" id="GO:0004615">
    <property type="term" value="F:phosphomannomutase activity"/>
    <property type="evidence" value="ECO:0007669"/>
    <property type="project" value="TreeGrafter"/>
</dbReference>
<dbReference type="GO" id="GO:0005975">
    <property type="term" value="P:carbohydrate metabolic process"/>
    <property type="evidence" value="ECO:0007669"/>
    <property type="project" value="InterPro"/>
</dbReference>
<dbReference type="GO" id="GO:0009252">
    <property type="term" value="P:peptidoglycan biosynthetic process"/>
    <property type="evidence" value="ECO:0007669"/>
    <property type="project" value="TreeGrafter"/>
</dbReference>
<dbReference type="GO" id="GO:0006048">
    <property type="term" value="P:UDP-N-acetylglucosamine biosynthetic process"/>
    <property type="evidence" value="ECO:0007669"/>
    <property type="project" value="TreeGrafter"/>
</dbReference>
<dbReference type="CDD" id="cd05802">
    <property type="entry name" value="GlmM"/>
    <property type="match status" value="1"/>
</dbReference>
<dbReference type="FunFam" id="3.30.310.50:FF:000001">
    <property type="entry name" value="Phosphoglucosamine mutase"/>
    <property type="match status" value="1"/>
</dbReference>
<dbReference type="FunFam" id="3.40.120.10:FF:000001">
    <property type="entry name" value="Phosphoglucosamine mutase"/>
    <property type="match status" value="1"/>
</dbReference>
<dbReference type="FunFam" id="3.40.120.10:FF:000003">
    <property type="entry name" value="Phosphoglucosamine mutase"/>
    <property type="match status" value="1"/>
</dbReference>
<dbReference type="Gene3D" id="3.40.120.10">
    <property type="entry name" value="Alpha-D-Glucose-1,6-Bisphosphate, subunit A, domain 3"/>
    <property type="match status" value="3"/>
</dbReference>
<dbReference type="Gene3D" id="3.30.310.50">
    <property type="entry name" value="Alpha-D-phosphohexomutase, C-terminal domain"/>
    <property type="match status" value="1"/>
</dbReference>
<dbReference type="HAMAP" id="MF_01554_B">
    <property type="entry name" value="GlmM_B"/>
    <property type="match status" value="1"/>
</dbReference>
<dbReference type="InterPro" id="IPR005844">
    <property type="entry name" value="A-D-PHexomutase_a/b/a-I"/>
</dbReference>
<dbReference type="InterPro" id="IPR016055">
    <property type="entry name" value="A-D-PHexomutase_a/b/a-I/II/III"/>
</dbReference>
<dbReference type="InterPro" id="IPR005845">
    <property type="entry name" value="A-D-PHexomutase_a/b/a-II"/>
</dbReference>
<dbReference type="InterPro" id="IPR005846">
    <property type="entry name" value="A-D-PHexomutase_a/b/a-III"/>
</dbReference>
<dbReference type="InterPro" id="IPR005843">
    <property type="entry name" value="A-D-PHexomutase_C"/>
</dbReference>
<dbReference type="InterPro" id="IPR036900">
    <property type="entry name" value="A-D-PHexomutase_C_sf"/>
</dbReference>
<dbReference type="InterPro" id="IPR016066">
    <property type="entry name" value="A-D-PHexomutase_CS"/>
</dbReference>
<dbReference type="InterPro" id="IPR005841">
    <property type="entry name" value="Alpha-D-phosphohexomutase_SF"/>
</dbReference>
<dbReference type="InterPro" id="IPR006352">
    <property type="entry name" value="GlmM_bact"/>
</dbReference>
<dbReference type="InterPro" id="IPR050060">
    <property type="entry name" value="Phosphoglucosamine_mutase"/>
</dbReference>
<dbReference type="NCBIfam" id="TIGR01455">
    <property type="entry name" value="glmM"/>
    <property type="match status" value="1"/>
</dbReference>
<dbReference type="NCBIfam" id="NF008139">
    <property type="entry name" value="PRK10887.1"/>
    <property type="match status" value="1"/>
</dbReference>
<dbReference type="PANTHER" id="PTHR42946:SF1">
    <property type="entry name" value="PHOSPHOGLUCOMUTASE (ALPHA-D-GLUCOSE-1,6-BISPHOSPHATE-DEPENDENT)"/>
    <property type="match status" value="1"/>
</dbReference>
<dbReference type="PANTHER" id="PTHR42946">
    <property type="entry name" value="PHOSPHOHEXOSE MUTASE"/>
    <property type="match status" value="1"/>
</dbReference>
<dbReference type="Pfam" id="PF02878">
    <property type="entry name" value="PGM_PMM_I"/>
    <property type="match status" value="1"/>
</dbReference>
<dbReference type="Pfam" id="PF02879">
    <property type="entry name" value="PGM_PMM_II"/>
    <property type="match status" value="1"/>
</dbReference>
<dbReference type="Pfam" id="PF02880">
    <property type="entry name" value="PGM_PMM_III"/>
    <property type="match status" value="1"/>
</dbReference>
<dbReference type="Pfam" id="PF00408">
    <property type="entry name" value="PGM_PMM_IV"/>
    <property type="match status" value="1"/>
</dbReference>
<dbReference type="PRINTS" id="PR00509">
    <property type="entry name" value="PGMPMM"/>
</dbReference>
<dbReference type="SUPFAM" id="SSF55957">
    <property type="entry name" value="Phosphoglucomutase, C-terminal domain"/>
    <property type="match status" value="1"/>
</dbReference>
<dbReference type="SUPFAM" id="SSF53738">
    <property type="entry name" value="Phosphoglucomutase, first 3 domains"/>
    <property type="match status" value="3"/>
</dbReference>
<dbReference type="PROSITE" id="PS00710">
    <property type="entry name" value="PGM_PMM"/>
    <property type="match status" value="1"/>
</dbReference>
<proteinExistence type="inferred from homology"/>
<comment type="function">
    <text evidence="1">Catalyzes the conversion of glucosamine-6-phosphate to glucosamine-1-phosphate.</text>
</comment>
<comment type="catalytic activity">
    <reaction evidence="1">
        <text>alpha-D-glucosamine 1-phosphate = D-glucosamine 6-phosphate</text>
        <dbReference type="Rhea" id="RHEA:23424"/>
        <dbReference type="ChEBI" id="CHEBI:58516"/>
        <dbReference type="ChEBI" id="CHEBI:58725"/>
        <dbReference type="EC" id="5.4.2.10"/>
    </reaction>
</comment>
<comment type="cofactor">
    <cofactor evidence="1">
        <name>Mg(2+)</name>
        <dbReference type="ChEBI" id="CHEBI:18420"/>
    </cofactor>
    <text evidence="1">Binds 1 Mg(2+) ion per subunit.</text>
</comment>
<comment type="PTM">
    <text evidence="1">Activated by phosphorylation.</text>
</comment>
<comment type="similarity">
    <text evidence="1">Belongs to the phosphohexose mutase family.</text>
</comment>
<protein>
    <recommendedName>
        <fullName evidence="1">Phosphoglucosamine mutase</fullName>
        <ecNumber evidence="1">5.4.2.10</ecNumber>
    </recommendedName>
</protein>